<feature type="chain" id="PRO_0000337632" description="3-(3-hydroxy-phenyl)propionate/3-hydroxycinnamic acid hydroxylase">
    <location>
        <begin position="1"/>
        <end position="554"/>
    </location>
</feature>
<feature type="binding site" evidence="1">
    <location>
        <begin position="17"/>
        <end position="46"/>
    </location>
    <ligand>
        <name>FAD</name>
        <dbReference type="ChEBI" id="CHEBI:57692"/>
    </ligand>
</feature>
<feature type="binding site" evidence="1">
    <location>
        <begin position="285"/>
        <end position="295"/>
    </location>
    <ligand>
        <name>FAD</name>
        <dbReference type="ChEBI" id="CHEBI:57692"/>
    </ligand>
</feature>
<organism>
    <name type="scientific">Escherichia coli O9:H4 (strain HS)</name>
    <dbReference type="NCBI Taxonomy" id="331112"/>
    <lineage>
        <taxon>Bacteria</taxon>
        <taxon>Pseudomonadati</taxon>
        <taxon>Pseudomonadota</taxon>
        <taxon>Gammaproteobacteria</taxon>
        <taxon>Enterobacterales</taxon>
        <taxon>Enterobacteriaceae</taxon>
        <taxon>Escherichia</taxon>
    </lineage>
</organism>
<accession>A7ZWZ4</accession>
<protein>
    <recommendedName>
        <fullName evidence="1">3-(3-hydroxy-phenyl)propionate/3-hydroxycinnamic acid hydroxylase</fullName>
        <shortName evidence="1">3-HCI hydroxylase</shortName>
        <shortName evidence="1">3-HPP hydroxylase</shortName>
        <ecNumber evidence="1">1.14.13.127</ecNumber>
    </recommendedName>
</protein>
<evidence type="ECO:0000255" key="1">
    <source>
        <dbReference type="HAMAP-Rule" id="MF_01652"/>
    </source>
</evidence>
<dbReference type="EC" id="1.14.13.127" evidence="1"/>
<dbReference type="EMBL" id="CP000802">
    <property type="protein sequence ID" value="ABV04798.1"/>
    <property type="molecule type" value="Genomic_DNA"/>
</dbReference>
<dbReference type="RefSeq" id="WP_001007446.1">
    <property type="nucleotide sequence ID" value="NC_009800.1"/>
</dbReference>
<dbReference type="SMR" id="A7ZWZ4"/>
<dbReference type="KEGG" id="ecx:EcHS_A0411"/>
<dbReference type="HOGENOM" id="CLU_009665_20_2_6"/>
<dbReference type="UniPathway" id="UPA00714"/>
<dbReference type="GO" id="GO:0008688">
    <property type="term" value="F:3-(3-hydroxyphenyl)propionate hydroxylase activity"/>
    <property type="evidence" value="ECO:0007669"/>
    <property type="project" value="UniProtKB-UniRule"/>
</dbReference>
<dbReference type="GO" id="GO:0071949">
    <property type="term" value="F:FAD binding"/>
    <property type="evidence" value="ECO:0007669"/>
    <property type="project" value="InterPro"/>
</dbReference>
<dbReference type="GO" id="GO:0019622">
    <property type="term" value="P:3-(3-hydroxy)phenylpropionate catabolic process"/>
    <property type="evidence" value="ECO:0007669"/>
    <property type="project" value="UniProtKB-UniRule"/>
</dbReference>
<dbReference type="GO" id="GO:0019380">
    <property type="term" value="P:3-phenylpropionate catabolic process"/>
    <property type="evidence" value="ECO:0007669"/>
    <property type="project" value="UniProtKB-UniPathway"/>
</dbReference>
<dbReference type="FunFam" id="3.30.70.2450:FF:000001">
    <property type="entry name" value="3-(3-hydroxy-phenyl)propionate/3-hydroxycinnamic acid hydroxylase"/>
    <property type="match status" value="1"/>
</dbReference>
<dbReference type="FunFam" id="3.50.50.60:FF:000126">
    <property type="entry name" value="3-(3-hydroxy-phenyl)propionate/3-hydroxycinnamic acid hydroxylase"/>
    <property type="match status" value="1"/>
</dbReference>
<dbReference type="Gene3D" id="3.30.70.2450">
    <property type="match status" value="1"/>
</dbReference>
<dbReference type="Gene3D" id="3.50.50.60">
    <property type="entry name" value="FAD/NAD(P)-binding domain"/>
    <property type="match status" value="1"/>
</dbReference>
<dbReference type="HAMAP" id="MF_01652">
    <property type="entry name" value="MhpA"/>
    <property type="match status" value="1"/>
</dbReference>
<dbReference type="InterPro" id="IPR023786">
    <property type="entry name" value="3-HPP/3HCI_hydroxylase"/>
</dbReference>
<dbReference type="InterPro" id="IPR002938">
    <property type="entry name" value="FAD-bd"/>
</dbReference>
<dbReference type="InterPro" id="IPR036188">
    <property type="entry name" value="FAD/NAD-bd_sf"/>
</dbReference>
<dbReference type="InterPro" id="IPR050631">
    <property type="entry name" value="PheA/TfdB_FAD_monoxygenase"/>
</dbReference>
<dbReference type="NCBIfam" id="NF004827">
    <property type="entry name" value="PRK06183.1-1"/>
    <property type="match status" value="1"/>
</dbReference>
<dbReference type="NCBIfam" id="NF004829">
    <property type="entry name" value="PRK06183.1-3"/>
    <property type="match status" value="1"/>
</dbReference>
<dbReference type="NCBIfam" id="NF004831">
    <property type="entry name" value="PRK06183.1-5"/>
    <property type="match status" value="1"/>
</dbReference>
<dbReference type="PANTHER" id="PTHR43476">
    <property type="entry name" value="3-(3-HYDROXY-PHENYL)PROPIONATE/3-HYDROXYCINNAMIC ACID HYDROXYLASE"/>
    <property type="match status" value="1"/>
</dbReference>
<dbReference type="PANTHER" id="PTHR43476:SF3">
    <property type="entry name" value="FAD-BINDING MONOOXYGENASE"/>
    <property type="match status" value="1"/>
</dbReference>
<dbReference type="Pfam" id="PF01494">
    <property type="entry name" value="FAD_binding_3"/>
    <property type="match status" value="1"/>
</dbReference>
<dbReference type="PRINTS" id="PR00420">
    <property type="entry name" value="RNGMNOXGNASE"/>
</dbReference>
<dbReference type="SUPFAM" id="SSF51905">
    <property type="entry name" value="FAD/NAD(P)-binding domain"/>
    <property type="match status" value="1"/>
</dbReference>
<keyword id="KW-0058">Aromatic hydrocarbons catabolism</keyword>
<keyword id="KW-0274">FAD</keyword>
<keyword id="KW-0285">Flavoprotein</keyword>
<keyword id="KW-0520">NAD</keyword>
<keyword id="KW-0560">Oxidoreductase</keyword>
<sequence>MAIQHPDIQPAVNHSVQVAIAGAGPVGLMMANYLGQMGIDVLVVEKLDKLIDYPRAIGIDDEALRTMQSVGLVENVLPHTTPWHAMRFLTPKGRCFADIQPMTDEFGWPRRNAFIQPQVDAVMLEGLSRFPNVRCLFARELEAFSQQNDEVTLHLKTAEGQRETVKAQWLVACDGGASFVRRTLNVPFEGKTAPNQWIVVDIANDPLSTPHIYLCCDPVRPYVSAALPHAVRRFEFMVMPGETEEQLREPQNMRKLLSKVLPNPDNVELIRQRVYTHNARLAQRFRIDRVLLAGDAAHIMPVWQGQGYNSGMRDAFNLAWKLALVIQGKARDALLDTYQQERRDHAKAMIDLSVTAGNVLAPPKRWQGTLRDGVSWLLNYLPPVKRYFLEMRFKPMPQYYGGALMREGEAKHSPVGKMFIQPKVTLENGDVTLLDNAIGANFAVIGWGCNPLWGMSDEQIQQWRALGTRFIQVVPEVQIHTAQDNHDGVLRVGDTQGRLRSWFAQHNASLVVMRPDRFVAATAIPQTLGKTLNKLASVMTLTRPDADVSVEKVA</sequence>
<gene>
    <name evidence="1" type="primary">mhpA</name>
    <name type="ordered locus">EcHS_A0411</name>
</gene>
<name>MHPA_ECOHS</name>
<proteinExistence type="inferred from homology"/>
<comment type="function">
    <text evidence="1">Catalyzes the insertion of one atom of molecular oxygen into position 2 of the phenyl ring of 3-(3-hydroxyphenyl)propionate (3-HPP) and hydroxycinnamic acid (3HCI).</text>
</comment>
<comment type="catalytic activity">
    <reaction evidence="1">
        <text>3-(3-hydroxyphenyl)propanoate + NADH + O2 + H(+) = 3-(2,3-dihydroxyphenyl)propanoate + NAD(+) + H2O</text>
        <dbReference type="Rhea" id="RHEA:24785"/>
        <dbReference type="ChEBI" id="CHEBI:15377"/>
        <dbReference type="ChEBI" id="CHEBI:15378"/>
        <dbReference type="ChEBI" id="CHEBI:15379"/>
        <dbReference type="ChEBI" id="CHEBI:46951"/>
        <dbReference type="ChEBI" id="CHEBI:57277"/>
        <dbReference type="ChEBI" id="CHEBI:57540"/>
        <dbReference type="ChEBI" id="CHEBI:57945"/>
        <dbReference type="EC" id="1.14.13.127"/>
    </reaction>
</comment>
<comment type="catalytic activity">
    <reaction evidence="1">
        <text>(2E)-3-(3-hydroxyphenyl)prop-2-enoate + NADH + O2 + H(+) = (2E)-3-(2,3-dihydroxyphenyl)prop-2-enoate + NAD(+) + H2O</text>
        <dbReference type="Rhea" id="RHEA:27846"/>
        <dbReference type="ChEBI" id="CHEBI:15377"/>
        <dbReference type="ChEBI" id="CHEBI:15378"/>
        <dbReference type="ChEBI" id="CHEBI:15379"/>
        <dbReference type="ChEBI" id="CHEBI:47928"/>
        <dbReference type="ChEBI" id="CHEBI:57540"/>
        <dbReference type="ChEBI" id="CHEBI:57945"/>
        <dbReference type="ChEBI" id="CHEBI:58642"/>
        <dbReference type="EC" id="1.14.13.127"/>
    </reaction>
</comment>
<comment type="cofactor">
    <cofactor evidence="1">
        <name>FAD</name>
        <dbReference type="ChEBI" id="CHEBI:57692"/>
    </cofactor>
</comment>
<comment type="pathway">
    <text evidence="1">Aromatic compound metabolism; 3-phenylpropanoate degradation.</text>
</comment>
<comment type="similarity">
    <text evidence="1">Belongs to the PheA/TfdB FAD monooxygenase family.</text>
</comment>
<reference key="1">
    <citation type="journal article" date="2008" name="J. Bacteriol.">
        <title>The pangenome structure of Escherichia coli: comparative genomic analysis of E. coli commensal and pathogenic isolates.</title>
        <authorList>
            <person name="Rasko D.A."/>
            <person name="Rosovitz M.J."/>
            <person name="Myers G.S.A."/>
            <person name="Mongodin E.F."/>
            <person name="Fricke W.F."/>
            <person name="Gajer P."/>
            <person name="Crabtree J."/>
            <person name="Sebaihia M."/>
            <person name="Thomson N.R."/>
            <person name="Chaudhuri R."/>
            <person name="Henderson I.R."/>
            <person name="Sperandio V."/>
            <person name="Ravel J."/>
        </authorList>
    </citation>
    <scope>NUCLEOTIDE SEQUENCE [LARGE SCALE GENOMIC DNA]</scope>
    <source>
        <strain>HS</strain>
    </source>
</reference>